<dbReference type="EMBL" id="CP000088">
    <property type="protein sequence ID" value="AAZ56669.1"/>
    <property type="molecule type" value="Genomic_DNA"/>
</dbReference>
<dbReference type="RefSeq" id="WP_011293059.1">
    <property type="nucleotide sequence ID" value="NC_007333.1"/>
</dbReference>
<dbReference type="SMR" id="Q47LK3"/>
<dbReference type="STRING" id="269800.Tfu_2636"/>
<dbReference type="KEGG" id="tfu:Tfu_2636"/>
<dbReference type="eggNOG" id="COG0093">
    <property type="taxonomic scope" value="Bacteria"/>
</dbReference>
<dbReference type="HOGENOM" id="CLU_095071_2_1_11"/>
<dbReference type="OrthoDB" id="9806379at2"/>
<dbReference type="GO" id="GO:0022625">
    <property type="term" value="C:cytosolic large ribosomal subunit"/>
    <property type="evidence" value="ECO:0007669"/>
    <property type="project" value="TreeGrafter"/>
</dbReference>
<dbReference type="GO" id="GO:0070180">
    <property type="term" value="F:large ribosomal subunit rRNA binding"/>
    <property type="evidence" value="ECO:0007669"/>
    <property type="project" value="TreeGrafter"/>
</dbReference>
<dbReference type="GO" id="GO:0003735">
    <property type="term" value="F:structural constituent of ribosome"/>
    <property type="evidence" value="ECO:0007669"/>
    <property type="project" value="InterPro"/>
</dbReference>
<dbReference type="GO" id="GO:0006412">
    <property type="term" value="P:translation"/>
    <property type="evidence" value="ECO:0007669"/>
    <property type="project" value="UniProtKB-UniRule"/>
</dbReference>
<dbReference type="CDD" id="cd00337">
    <property type="entry name" value="Ribosomal_uL14"/>
    <property type="match status" value="1"/>
</dbReference>
<dbReference type="FunFam" id="2.40.150.20:FF:000001">
    <property type="entry name" value="50S ribosomal protein L14"/>
    <property type="match status" value="1"/>
</dbReference>
<dbReference type="Gene3D" id="2.40.150.20">
    <property type="entry name" value="Ribosomal protein L14"/>
    <property type="match status" value="1"/>
</dbReference>
<dbReference type="HAMAP" id="MF_01367">
    <property type="entry name" value="Ribosomal_uL14"/>
    <property type="match status" value="1"/>
</dbReference>
<dbReference type="InterPro" id="IPR000218">
    <property type="entry name" value="Ribosomal_uL14"/>
</dbReference>
<dbReference type="InterPro" id="IPR005745">
    <property type="entry name" value="Ribosomal_uL14_bac-type"/>
</dbReference>
<dbReference type="InterPro" id="IPR019972">
    <property type="entry name" value="Ribosomal_uL14_CS"/>
</dbReference>
<dbReference type="InterPro" id="IPR036853">
    <property type="entry name" value="Ribosomal_uL14_sf"/>
</dbReference>
<dbReference type="NCBIfam" id="TIGR01067">
    <property type="entry name" value="rplN_bact"/>
    <property type="match status" value="1"/>
</dbReference>
<dbReference type="PANTHER" id="PTHR11761">
    <property type="entry name" value="50S/60S RIBOSOMAL PROTEIN L14/L23"/>
    <property type="match status" value="1"/>
</dbReference>
<dbReference type="PANTHER" id="PTHR11761:SF3">
    <property type="entry name" value="LARGE RIBOSOMAL SUBUNIT PROTEIN UL14M"/>
    <property type="match status" value="1"/>
</dbReference>
<dbReference type="Pfam" id="PF00238">
    <property type="entry name" value="Ribosomal_L14"/>
    <property type="match status" value="1"/>
</dbReference>
<dbReference type="SMART" id="SM01374">
    <property type="entry name" value="Ribosomal_L14"/>
    <property type="match status" value="1"/>
</dbReference>
<dbReference type="SUPFAM" id="SSF50193">
    <property type="entry name" value="Ribosomal protein L14"/>
    <property type="match status" value="1"/>
</dbReference>
<dbReference type="PROSITE" id="PS00049">
    <property type="entry name" value="RIBOSOMAL_L14"/>
    <property type="match status" value="1"/>
</dbReference>
<organism>
    <name type="scientific">Thermobifida fusca (strain YX)</name>
    <dbReference type="NCBI Taxonomy" id="269800"/>
    <lineage>
        <taxon>Bacteria</taxon>
        <taxon>Bacillati</taxon>
        <taxon>Actinomycetota</taxon>
        <taxon>Actinomycetes</taxon>
        <taxon>Streptosporangiales</taxon>
        <taxon>Nocardiopsidaceae</taxon>
        <taxon>Thermobifida</taxon>
    </lineage>
</organism>
<reference key="1">
    <citation type="journal article" date="2007" name="J. Bacteriol.">
        <title>Genome sequence and analysis of the soil cellulolytic actinomycete Thermobifida fusca YX.</title>
        <authorList>
            <person name="Lykidis A."/>
            <person name="Mavromatis K."/>
            <person name="Ivanova N."/>
            <person name="Anderson I."/>
            <person name="Land M."/>
            <person name="DiBartolo G."/>
            <person name="Martinez M."/>
            <person name="Lapidus A."/>
            <person name="Lucas S."/>
            <person name="Copeland A."/>
            <person name="Richardson P."/>
            <person name="Wilson D.B."/>
            <person name="Kyrpides N."/>
        </authorList>
    </citation>
    <scope>NUCLEOTIDE SEQUENCE [LARGE SCALE GENOMIC DNA]</scope>
    <source>
        <strain>YX</strain>
    </source>
</reference>
<proteinExistence type="inferred from homology"/>
<sequence>MIQQESRLKVADNTGAKELLTIRVLGGSGRRYASIGDTIVATVKDALPGAGVKKGDIVKAVVVRTTKERRRPDGFYIRFDENAAVLIKDGGDPRGTRIFGPVGRELRDKKFMRIISLAPEVL</sequence>
<protein>
    <recommendedName>
        <fullName evidence="1">Large ribosomal subunit protein uL14</fullName>
    </recommendedName>
    <alternativeName>
        <fullName evidence="2">50S ribosomal protein L14</fullName>
    </alternativeName>
</protein>
<gene>
    <name evidence="1" type="primary">rplN</name>
    <name type="ordered locus">Tfu_2636</name>
</gene>
<comment type="function">
    <text evidence="1">Binds to 23S rRNA. Forms part of two intersubunit bridges in the 70S ribosome.</text>
</comment>
<comment type="subunit">
    <text evidence="1">Part of the 50S ribosomal subunit. Forms a cluster with proteins L3 and L19. In the 70S ribosome, L14 and L19 interact and together make contacts with the 16S rRNA in bridges B5 and B8.</text>
</comment>
<comment type="similarity">
    <text evidence="1">Belongs to the universal ribosomal protein uL14 family.</text>
</comment>
<keyword id="KW-0687">Ribonucleoprotein</keyword>
<keyword id="KW-0689">Ribosomal protein</keyword>
<keyword id="KW-0694">RNA-binding</keyword>
<keyword id="KW-0699">rRNA-binding</keyword>
<accession>Q47LK3</accession>
<name>RL14_THEFY</name>
<feature type="chain" id="PRO_1000055741" description="Large ribosomal subunit protein uL14">
    <location>
        <begin position="1"/>
        <end position="122"/>
    </location>
</feature>
<evidence type="ECO:0000255" key="1">
    <source>
        <dbReference type="HAMAP-Rule" id="MF_01367"/>
    </source>
</evidence>
<evidence type="ECO:0000305" key="2"/>